<protein>
    <recommendedName>
        <fullName>Protein BUD31 homolog</fullName>
    </recommendedName>
    <alternativeName>
        <fullName>Protein G10 homolog</fullName>
    </alternativeName>
</protein>
<name>BUD31_CAEEL</name>
<proteinExistence type="evidence at protein level"/>
<accession>P34313</accession>
<keyword id="KW-0002">3D-structure</keyword>
<keyword id="KW-0507">mRNA processing</keyword>
<keyword id="KW-0508">mRNA splicing</keyword>
<keyword id="KW-0539">Nucleus</keyword>
<keyword id="KW-1185">Reference proteome</keyword>
<keyword id="KW-0747">Spliceosome</keyword>
<dbReference type="EMBL" id="Z29094">
    <property type="protein sequence ID" value="CAA82338.1"/>
    <property type="molecule type" value="Genomic_DNA"/>
</dbReference>
<dbReference type="EMBL" id="AF303257">
    <property type="protein sequence ID" value="AAG50215.1"/>
    <property type="molecule type" value="mRNA"/>
</dbReference>
<dbReference type="PIR" id="S40703">
    <property type="entry name" value="S40703"/>
</dbReference>
<dbReference type="RefSeq" id="NP_001366676.1">
    <property type="nucleotide sequence ID" value="NM_001379868.1"/>
</dbReference>
<dbReference type="RefSeq" id="NP_499144.1">
    <property type="nucleotide sequence ID" value="NM_066743.6"/>
</dbReference>
<dbReference type="PDB" id="8RO0">
    <property type="method" value="EM"/>
    <property type="resolution" value="2.90 A"/>
    <property type="chains" value="N=1-147"/>
</dbReference>
<dbReference type="PDB" id="8RO1">
    <property type="method" value="EM"/>
    <property type="resolution" value="3.00 A"/>
    <property type="chains" value="N=1-147"/>
</dbReference>
<dbReference type="PDBsum" id="8RO0"/>
<dbReference type="PDBsum" id="8RO1"/>
<dbReference type="EMDB" id="EMD-19397"/>
<dbReference type="EMDB" id="EMD-19398"/>
<dbReference type="SMR" id="P34313"/>
<dbReference type="BioGRID" id="41563">
    <property type="interactions" value="4"/>
</dbReference>
<dbReference type="FunCoup" id="P34313">
    <property type="interactions" value="2952"/>
</dbReference>
<dbReference type="STRING" id="6239.C07A9.2.1"/>
<dbReference type="PaxDb" id="6239-C07A9.2.1"/>
<dbReference type="PeptideAtlas" id="P34313"/>
<dbReference type="EnsemblMetazoa" id="C07A9.2.1">
    <property type="protein sequence ID" value="C07A9.2.1"/>
    <property type="gene ID" value="WBGene00007400"/>
</dbReference>
<dbReference type="EnsemblMetazoa" id="C07A9.2.2">
    <property type="protein sequence ID" value="C07A9.2.2"/>
    <property type="gene ID" value="WBGene00007400"/>
</dbReference>
<dbReference type="GeneID" id="176368"/>
<dbReference type="UCSC" id="C07A9.2.1">
    <property type="organism name" value="c. elegans"/>
</dbReference>
<dbReference type="AGR" id="WB:WBGene00007400"/>
<dbReference type="WormBase" id="C07A9.2">
    <property type="protein sequence ID" value="CE00499"/>
    <property type="gene ID" value="WBGene00007400"/>
    <property type="gene designation" value="bud-31"/>
</dbReference>
<dbReference type="eggNOG" id="KOG3404">
    <property type="taxonomic scope" value="Eukaryota"/>
</dbReference>
<dbReference type="GeneTree" id="ENSGT00390000014300"/>
<dbReference type="HOGENOM" id="CLU_087132_1_1_1"/>
<dbReference type="InParanoid" id="P34313"/>
<dbReference type="OMA" id="FGTSCIC"/>
<dbReference type="OrthoDB" id="277109at2759"/>
<dbReference type="PhylomeDB" id="P34313"/>
<dbReference type="Reactome" id="R-CEL-72163">
    <property type="pathway name" value="mRNA Splicing - Major Pathway"/>
</dbReference>
<dbReference type="PRO" id="PR:P34313"/>
<dbReference type="Proteomes" id="UP000001940">
    <property type="component" value="Chromosome III"/>
</dbReference>
<dbReference type="Bgee" id="WBGene00007400">
    <property type="expression patterns" value="Expressed in germ line (C elegans) and 4 other cell types or tissues"/>
</dbReference>
<dbReference type="GO" id="GO:0005681">
    <property type="term" value="C:spliceosomal complex"/>
    <property type="evidence" value="ECO:0000318"/>
    <property type="project" value="GO_Central"/>
</dbReference>
<dbReference type="GO" id="GO:0000398">
    <property type="term" value="P:mRNA splicing, via spliceosome"/>
    <property type="evidence" value="ECO:0000318"/>
    <property type="project" value="GO_Central"/>
</dbReference>
<dbReference type="InterPro" id="IPR001748">
    <property type="entry name" value="BUD31"/>
</dbReference>
<dbReference type="InterPro" id="IPR018230">
    <property type="entry name" value="BUD31/G10-rel_CS"/>
</dbReference>
<dbReference type="PANTHER" id="PTHR19411:SF0">
    <property type="entry name" value="PROTEIN BUD31 HOMOLOG"/>
    <property type="match status" value="1"/>
</dbReference>
<dbReference type="PANTHER" id="PTHR19411">
    <property type="entry name" value="PROTEIN BUD31-RELATED"/>
    <property type="match status" value="1"/>
</dbReference>
<dbReference type="Pfam" id="PF01125">
    <property type="entry name" value="BUD31"/>
    <property type="match status" value="1"/>
</dbReference>
<dbReference type="PRINTS" id="PR00322">
    <property type="entry name" value="G10"/>
</dbReference>
<dbReference type="PROSITE" id="PS00997">
    <property type="entry name" value="G10_1"/>
    <property type="match status" value="1"/>
</dbReference>
<dbReference type="PROSITE" id="PS00998">
    <property type="entry name" value="G10_2"/>
    <property type="match status" value="1"/>
</dbReference>
<organism>
    <name type="scientific">Caenorhabditis elegans</name>
    <dbReference type="NCBI Taxonomy" id="6239"/>
    <lineage>
        <taxon>Eukaryota</taxon>
        <taxon>Metazoa</taxon>
        <taxon>Ecdysozoa</taxon>
        <taxon>Nematoda</taxon>
        <taxon>Chromadorea</taxon>
        <taxon>Rhabditida</taxon>
        <taxon>Rhabditina</taxon>
        <taxon>Rhabditomorpha</taxon>
        <taxon>Rhabditoidea</taxon>
        <taxon>Rhabditidae</taxon>
        <taxon>Peloderinae</taxon>
        <taxon>Caenorhabditis</taxon>
    </lineage>
</organism>
<reference key="1">
    <citation type="journal article" date="1994" name="Nature">
        <title>2.2 Mb of contiguous nucleotide sequence from chromosome III of C. elegans.</title>
        <authorList>
            <person name="Wilson R."/>
            <person name="Ainscough R."/>
            <person name="Anderson K."/>
            <person name="Baynes C."/>
            <person name="Berks M."/>
            <person name="Bonfield J."/>
            <person name="Burton J."/>
            <person name="Connell M."/>
            <person name="Copsey T."/>
            <person name="Cooper J."/>
            <person name="Coulson A."/>
            <person name="Craxton M."/>
            <person name="Dear S."/>
            <person name="Du Z."/>
            <person name="Durbin R."/>
            <person name="Favello A."/>
            <person name="Fraser A."/>
            <person name="Fulton L."/>
            <person name="Gardner A."/>
            <person name="Green P."/>
            <person name="Hawkins T."/>
            <person name="Hillier L."/>
            <person name="Jier M."/>
            <person name="Johnston L."/>
            <person name="Jones M."/>
            <person name="Kershaw J."/>
            <person name="Kirsten J."/>
            <person name="Laisster N."/>
            <person name="Latreille P."/>
            <person name="Lightning J."/>
            <person name="Lloyd C."/>
            <person name="Mortimore B."/>
            <person name="O'Callaghan M."/>
            <person name="Parsons J."/>
            <person name="Percy C."/>
            <person name="Rifken L."/>
            <person name="Roopra A."/>
            <person name="Saunders D."/>
            <person name="Shownkeen R."/>
            <person name="Sims M."/>
            <person name="Smaldon N."/>
            <person name="Smith A."/>
            <person name="Smith M."/>
            <person name="Sonnhammer E."/>
            <person name="Staden R."/>
            <person name="Sulston J."/>
            <person name="Thierry-Mieg J."/>
            <person name="Thomas K."/>
            <person name="Vaudin M."/>
            <person name="Vaughan K."/>
            <person name="Waterston R."/>
            <person name="Watson A."/>
            <person name="Weinstock L."/>
            <person name="Wilkinson-Sproat J."/>
            <person name="Wohldman P."/>
        </authorList>
    </citation>
    <scope>NUCLEOTIDE SEQUENCE [LARGE SCALE GENOMIC DNA]</scope>
    <source>
        <strain>Bristol N2</strain>
    </source>
</reference>
<reference key="2">
    <citation type="journal article" date="1998" name="Science">
        <title>Genome sequence of the nematode C. elegans: a platform for investigating biology.</title>
        <authorList>
            <consortium name="The C. elegans sequencing consortium"/>
        </authorList>
    </citation>
    <scope>NUCLEOTIDE SEQUENCE [LARGE SCALE GENOMIC DNA]</scope>
    <source>
        <strain>Bristol N2</strain>
    </source>
</reference>
<reference key="3">
    <citation type="submission" date="2000-08" db="EMBL/GenBank/DDBJ databases">
        <title>The Caenorhabditis elegans transcriptome project, a complementary view of the genome.</title>
        <authorList>
            <person name="Kohara Y."/>
            <person name="Shin-i T."/>
            <person name="Suzuki Y."/>
            <person name="Sugano S."/>
            <person name="Potdevin M."/>
            <person name="Thierry-Mieg Y."/>
            <person name="Thierry-Mieg D."/>
            <person name="Thierry-Mieg J."/>
        </authorList>
    </citation>
    <scope>NUCLEOTIDE SEQUENCE [LARGE SCALE MRNA]</scope>
    <source>
        <strain>Bristol N2</strain>
    </source>
</reference>
<sequence length="147" mass="17123">MSLATKLRRVRKSPPEGWDLIEPTLEQFEAKMREAETEPHEGKRKTEINWPIFRIHHQRSRYVYDMYYKKAEISRELYEFCLTAKFADAALIAKWKKQGYENLCCVKCVNTRDSNFGTACICRVPKSKLDAERVIECVHCGCHGCSG</sequence>
<evidence type="ECO:0000250" key="1">
    <source>
        <dbReference type="UniProtKB" id="P41223"/>
    </source>
</evidence>
<evidence type="ECO:0000255" key="2"/>
<evidence type="ECO:0000305" key="3"/>
<evidence type="ECO:0000312" key="4">
    <source>
        <dbReference type="WormBase" id="C07A9.2"/>
    </source>
</evidence>
<gene>
    <name evidence="4" type="primary">bud-31</name>
    <name evidence="4" type="ORF">C07A9.2</name>
</gene>
<feature type="chain" id="PRO_0000193896" description="Protein BUD31 homolog">
    <location>
        <begin position="1"/>
        <end position="147"/>
    </location>
</feature>
<feature type="short sequence motif" description="Nuclear localization signal" evidence="2">
    <location>
        <begin position="8"/>
        <end position="12"/>
    </location>
</feature>
<comment type="function">
    <text evidence="1">Involved in pre-mRNA splicing process.</text>
</comment>
<comment type="subunit">
    <text evidence="1">Identified in the spliceosome C complex.</text>
</comment>
<comment type="subcellular location">
    <subcellularLocation>
        <location evidence="1">Nucleus</location>
    </subcellularLocation>
</comment>
<comment type="similarity">
    <text evidence="3">Belongs to the BUD31 (G10) family.</text>
</comment>